<reference key="1">
    <citation type="journal article" date="2011" name="MBio">
        <title>Novel metabolic attributes of the genus Cyanothece, comprising a group of unicellular nitrogen-fixing Cyanobacteria.</title>
        <authorList>
            <person name="Bandyopadhyay A."/>
            <person name="Elvitigala T."/>
            <person name="Welsh E."/>
            <person name="Stockel J."/>
            <person name="Liberton M."/>
            <person name="Min H."/>
            <person name="Sherman L.A."/>
            <person name="Pakrasi H.B."/>
        </authorList>
    </citation>
    <scope>NUCLEOTIDE SEQUENCE [LARGE SCALE GENOMIC DNA]</scope>
    <source>
        <strain>PCC 8801 / RF-1</strain>
    </source>
</reference>
<keyword id="KW-0472">Membrane</keyword>
<keyword id="KW-0520">NAD</keyword>
<keyword id="KW-0521">NADP</keyword>
<keyword id="KW-0618">Plastoquinone</keyword>
<keyword id="KW-0874">Quinone</keyword>
<keyword id="KW-1185">Reference proteome</keyword>
<keyword id="KW-0793">Thylakoid</keyword>
<keyword id="KW-1278">Translocase</keyword>
<keyword id="KW-0813">Transport</keyword>
<evidence type="ECO:0000255" key="1">
    <source>
        <dbReference type="HAMAP-Rule" id="MF_01353"/>
    </source>
</evidence>
<gene>
    <name evidence="1" type="primary">ndhN</name>
    <name type="ordered locus">PCC8801_0781</name>
</gene>
<sequence>MALLTNGKGFIRALEKSGSLAVYAPLEGGFEGRYQRRLRTNGYHTFSLTARGLGDVSAYLMGVHGVRPPHLGKKNIGQEAAVGPVYFVPPIAAYQLETLPPKSKGLVLWILEGFILSQTELEYLANLPTLEPRLKVVIELGGERYFSWKPLPEVIKVA</sequence>
<proteinExistence type="inferred from homology"/>
<dbReference type="EC" id="7.1.1.-" evidence="1"/>
<dbReference type="EMBL" id="CP001287">
    <property type="protein sequence ID" value="ACK64863.1"/>
    <property type="molecule type" value="Genomic_DNA"/>
</dbReference>
<dbReference type="RefSeq" id="WP_012594139.1">
    <property type="nucleotide sequence ID" value="NC_011726.1"/>
</dbReference>
<dbReference type="SMR" id="B7JYJ3"/>
<dbReference type="STRING" id="41431.PCC8801_0781"/>
<dbReference type="KEGG" id="cyp:PCC8801_0781"/>
<dbReference type="eggNOG" id="ENOG502ZBMI">
    <property type="taxonomic scope" value="Bacteria"/>
</dbReference>
<dbReference type="HOGENOM" id="CLU_087432_0_0_3"/>
<dbReference type="OrthoDB" id="510798at2"/>
<dbReference type="Proteomes" id="UP000008204">
    <property type="component" value="Chromosome"/>
</dbReference>
<dbReference type="GO" id="GO:0031676">
    <property type="term" value="C:plasma membrane-derived thylakoid membrane"/>
    <property type="evidence" value="ECO:0007669"/>
    <property type="project" value="UniProtKB-SubCell"/>
</dbReference>
<dbReference type="GO" id="GO:0016655">
    <property type="term" value="F:oxidoreductase activity, acting on NAD(P)H, quinone or similar compound as acceptor"/>
    <property type="evidence" value="ECO:0007669"/>
    <property type="project" value="UniProtKB-UniRule"/>
</dbReference>
<dbReference type="GO" id="GO:0048038">
    <property type="term" value="F:quinone binding"/>
    <property type="evidence" value="ECO:0007669"/>
    <property type="project" value="UniProtKB-KW"/>
</dbReference>
<dbReference type="HAMAP" id="MF_01353">
    <property type="entry name" value="NDH1_NDH1N"/>
    <property type="match status" value="1"/>
</dbReference>
<dbReference type="InterPro" id="IPR020874">
    <property type="entry name" value="NAD(P)H-quinone_OxRdtase_su_N"/>
</dbReference>
<dbReference type="PANTHER" id="PTHR35515">
    <property type="entry name" value="NAD(P)H-QUINONE OXIDOREDUCTASE SUBUNIT N, CHLOROPLASTIC"/>
    <property type="match status" value="1"/>
</dbReference>
<dbReference type="PANTHER" id="PTHR35515:SF1">
    <property type="entry name" value="NAD(P)H-QUINONE OXIDOREDUCTASE SUBUNIT N, CHLOROPLASTIC"/>
    <property type="match status" value="1"/>
</dbReference>
<dbReference type="Pfam" id="PF11909">
    <property type="entry name" value="NdhN"/>
    <property type="match status" value="1"/>
</dbReference>
<comment type="function">
    <text evidence="1">NDH-1 shuttles electrons from an unknown electron donor, via FMN and iron-sulfur (Fe-S) centers, to quinones in the respiratory and/or the photosynthetic chain. The immediate electron acceptor for the enzyme in this species is believed to be plastoquinone. Couples the redox reaction to proton translocation, and thus conserves the redox energy in a proton gradient. Cyanobacterial NDH-1 also plays a role in inorganic carbon-concentration.</text>
</comment>
<comment type="catalytic activity">
    <reaction evidence="1">
        <text>a plastoquinone + NADH + (n+1) H(+)(in) = a plastoquinol + NAD(+) + n H(+)(out)</text>
        <dbReference type="Rhea" id="RHEA:42608"/>
        <dbReference type="Rhea" id="RHEA-COMP:9561"/>
        <dbReference type="Rhea" id="RHEA-COMP:9562"/>
        <dbReference type="ChEBI" id="CHEBI:15378"/>
        <dbReference type="ChEBI" id="CHEBI:17757"/>
        <dbReference type="ChEBI" id="CHEBI:57540"/>
        <dbReference type="ChEBI" id="CHEBI:57945"/>
        <dbReference type="ChEBI" id="CHEBI:62192"/>
    </reaction>
</comment>
<comment type="catalytic activity">
    <reaction evidence="1">
        <text>a plastoquinone + NADPH + (n+1) H(+)(in) = a plastoquinol + NADP(+) + n H(+)(out)</text>
        <dbReference type="Rhea" id="RHEA:42612"/>
        <dbReference type="Rhea" id="RHEA-COMP:9561"/>
        <dbReference type="Rhea" id="RHEA-COMP:9562"/>
        <dbReference type="ChEBI" id="CHEBI:15378"/>
        <dbReference type="ChEBI" id="CHEBI:17757"/>
        <dbReference type="ChEBI" id="CHEBI:57783"/>
        <dbReference type="ChEBI" id="CHEBI:58349"/>
        <dbReference type="ChEBI" id="CHEBI:62192"/>
    </reaction>
</comment>
<comment type="subunit">
    <text evidence="1">NDH-1 can be composed of about 15 different subunits; different subcomplexes with different compositions have been identified which probably have different functions.</text>
</comment>
<comment type="subcellular location">
    <subcellularLocation>
        <location evidence="1">Cellular thylakoid membrane</location>
        <topology evidence="1">Peripheral membrane protein</topology>
        <orientation evidence="1">Cytoplasmic side</orientation>
    </subcellularLocation>
</comment>
<comment type="similarity">
    <text evidence="1">Belongs to the complex I NdhN subunit family.</text>
</comment>
<name>NDHN_RIPO1</name>
<protein>
    <recommendedName>
        <fullName evidence="1">NAD(P)H-quinone oxidoreductase subunit N</fullName>
        <ecNumber evidence="1">7.1.1.-</ecNumber>
    </recommendedName>
    <alternativeName>
        <fullName evidence="1">NAD(P)H dehydrogenase I subunit N</fullName>
        <shortName evidence="1">NDH-1 subunit N</shortName>
        <shortName evidence="1">NDH-N</shortName>
    </alternativeName>
</protein>
<feature type="chain" id="PRO_1000143675" description="NAD(P)H-quinone oxidoreductase subunit N">
    <location>
        <begin position="1"/>
        <end position="158"/>
    </location>
</feature>
<organism>
    <name type="scientific">Rippkaea orientalis (strain PCC 8801 / RF-1)</name>
    <name type="common">Cyanothece sp. (strain PCC 8801)</name>
    <dbReference type="NCBI Taxonomy" id="41431"/>
    <lineage>
        <taxon>Bacteria</taxon>
        <taxon>Bacillati</taxon>
        <taxon>Cyanobacteriota</taxon>
        <taxon>Cyanophyceae</taxon>
        <taxon>Oscillatoriophycideae</taxon>
        <taxon>Chroococcales</taxon>
        <taxon>Aphanothecaceae</taxon>
        <taxon>Rippkaea</taxon>
        <taxon>Rippkaea orientalis</taxon>
    </lineage>
</organism>
<accession>B7JYJ3</accession>